<accession>A7X4S0</accession>
<organism>
    <name type="scientific">Oxyuranus microlepidotus</name>
    <name type="common">Inland taipan</name>
    <name type="synonym">Diemenia microlepidota</name>
    <dbReference type="NCBI Taxonomy" id="111177"/>
    <lineage>
        <taxon>Eukaryota</taxon>
        <taxon>Metazoa</taxon>
        <taxon>Chordata</taxon>
        <taxon>Craniata</taxon>
        <taxon>Vertebrata</taxon>
        <taxon>Euteleostomi</taxon>
        <taxon>Lepidosauria</taxon>
        <taxon>Squamata</taxon>
        <taxon>Bifurcata</taxon>
        <taxon>Unidentata</taxon>
        <taxon>Episquamata</taxon>
        <taxon>Toxicofera</taxon>
        <taxon>Serpentes</taxon>
        <taxon>Colubroidea</taxon>
        <taxon>Elapidae</taxon>
        <taxon>Hydrophiinae</taxon>
        <taxon>Oxyuranus</taxon>
    </lineage>
</organism>
<evidence type="ECO:0000250" key="1"/>
<evidence type="ECO:0000250" key="2">
    <source>
        <dbReference type="UniProtKB" id="P0C1Z0"/>
    </source>
</evidence>
<evidence type="ECO:0000250" key="3">
    <source>
        <dbReference type="UniProtKB" id="P60775"/>
    </source>
</evidence>
<evidence type="ECO:0000255" key="4"/>
<evidence type="ECO:0000305" key="5"/>
<feature type="signal peptide" evidence="4">
    <location>
        <begin position="1"/>
        <end position="21"/>
    </location>
</feature>
<feature type="chain" id="PRO_0000316175" description="Short neurotoxin 3FTx-Oxy4">
    <location>
        <begin position="22"/>
        <end position="83"/>
    </location>
</feature>
<feature type="disulfide bond" evidence="2">
    <location>
        <begin position="24"/>
        <end position="45"/>
    </location>
</feature>
<feature type="disulfide bond" evidence="2">
    <location>
        <begin position="38"/>
        <end position="62"/>
    </location>
</feature>
<feature type="disulfide bond" evidence="2">
    <location>
        <begin position="64"/>
        <end position="75"/>
    </location>
</feature>
<feature type="disulfide bond" evidence="2">
    <location>
        <begin position="76"/>
        <end position="81"/>
    </location>
</feature>
<keyword id="KW-0008">Acetylcholine receptor inhibiting toxin</keyword>
<keyword id="KW-1015">Disulfide bond</keyword>
<keyword id="KW-0872">Ion channel impairing toxin</keyword>
<keyword id="KW-0528">Neurotoxin</keyword>
<keyword id="KW-0629">Postsynaptic neurotoxin</keyword>
<keyword id="KW-0964">Secreted</keyword>
<keyword id="KW-0732">Signal</keyword>
<keyword id="KW-0800">Toxin</keyword>
<sequence length="83" mass="9087">MKTLLLTLVVVTIVCLDLGYTMTCYNQQSSEAKTTTTCSGGVSSCYKETWYDGRGTRIERGCGCPRAKKGIERICCGTDKCNN</sequence>
<comment type="function">
    <text evidence="3">Binds to muscle nicotinic acetylcholine receptor (nAChR) and inhibit acetylcholine from binding to the receptor, thereby impairing neuromuscular transmission.</text>
</comment>
<comment type="subcellular location">
    <subcellularLocation>
        <location evidence="1">Secreted</location>
    </subcellularLocation>
</comment>
<comment type="tissue specificity">
    <text evidence="5">Expressed by the venom gland.</text>
</comment>
<comment type="similarity">
    <text evidence="5">Belongs to the three-finger toxin family. Short-chain subfamily. Type I alpha-neurotoxin sub-subfamily.</text>
</comment>
<protein>
    <recommendedName>
        <fullName>Short neurotoxin 3FTx-Oxy4</fullName>
    </recommendedName>
</protein>
<reference key="1">
    <citation type="journal article" date="2008" name="Mol. Cell. Proteomics">
        <title>Evolution of an arsenal: structural and functional diversification of the venom system in the advanced snakes (Caenophidia).</title>
        <authorList>
            <person name="Fry B.G."/>
            <person name="Scheib H."/>
            <person name="van der Weerd L."/>
            <person name="Young B."/>
            <person name="McNaughtan J."/>
            <person name="Ramjan S.F.R."/>
            <person name="Vidal N."/>
            <person name="Poelmann R.E."/>
            <person name="Norman J.A."/>
        </authorList>
    </citation>
    <scope>NUCLEOTIDE SEQUENCE [LARGE SCALE MRNA]</scope>
    <source>
        <tissue>Venom gland</tissue>
    </source>
</reference>
<dbReference type="EMBL" id="EU029752">
    <property type="protein sequence ID" value="ABU68552.1"/>
    <property type="molecule type" value="mRNA"/>
</dbReference>
<dbReference type="SMR" id="A7X4S0"/>
<dbReference type="GO" id="GO:0005576">
    <property type="term" value="C:extracellular region"/>
    <property type="evidence" value="ECO:0007669"/>
    <property type="project" value="UniProtKB-SubCell"/>
</dbReference>
<dbReference type="GO" id="GO:0030550">
    <property type="term" value="F:acetylcholine receptor inhibitor activity"/>
    <property type="evidence" value="ECO:0007669"/>
    <property type="project" value="UniProtKB-KW"/>
</dbReference>
<dbReference type="GO" id="GO:0099106">
    <property type="term" value="F:ion channel regulator activity"/>
    <property type="evidence" value="ECO:0007669"/>
    <property type="project" value="UniProtKB-KW"/>
</dbReference>
<dbReference type="GO" id="GO:0090729">
    <property type="term" value="F:toxin activity"/>
    <property type="evidence" value="ECO:0007669"/>
    <property type="project" value="UniProtKB-KW"/>
</dbReference>
<dbReference type="CDD" id="cd00206">
    <property type="entry name" value="TFP_snake_toxin"/>
    <property type="match status" value="1"/>
</dbReference>
<dbReference type="FunFam" id="2.10.60.10:FF:000024">
    <property type="entry name" value="Cytotoxin 1"/>
    <property type="match status" value="1"/>
</dbReference>
<dbReference type="Gene3D" id="2.10.60.10">
    <property type="entry name" value="CD59"/>
    <property type="match status" value="1"/>
</dbReference>
<dbReference type="InterPro" id="IPR003571">
    <property type="entry name" value="Snake_3FTx"/>
</dbReference>
<dbReference type="InterPro" id="IPR045860">
    <property type="entry name" value="Snake_toxin-like_sf"/>
</dbReference>
<dbReference type="InterPro" id="IPR018354">
    <property type="entry name" value="Snake_toxin_con_site"/>
</dbReference>
<dbReference type="InterPro" id="IPR054131">
    <property type="entry name" value="Toxin_cobra-type"/>
</dbReference>
<dbReference type="Pfam" id="PF21947">
    <property type="entry name" value="Toxin_cobra-type"/>
    <property type="match status" value="1"/>
</dbReference>
<dbReference type="SUPFAM" id="SSF57302">
    <property type="entry name" value="Snake toxin-like"/>
    <property type="match status" value="1"/>
</dbReference>
<dbReference type="PROSITE" id="PS00272">
    <property type="entry name" value="SNAKE_TOXIN"/>
    <property type="match status" value="1"/>
</dbReference>
<name>3S14_OXYMI</name>
<proteinExistence type="inferred from homology"/>